<protein>
    <recommendedName>
        <fullName evidence="1">Large ribosomal subunit protein bL33</fullName>
    </recommendedName>
    <alternativeName>
        <fullName evidence="2">50S ribosomal protein L33</fullName>
    </alternativeName>
</protein>
<reference key="1">
    <citation type="submission" date="2009-01" db="EMBL/GenBank/DDBJ databases">
        <title>Complete sequence of chromosome of Arthrobacter chlorophenolicus A6.</title>
        <authorList>
            <consortium name="US DOE Joint Genome Institute"/>
            <person name="Lucas S."/>
            <person name="Copeland A."/>
            <person name="Lapidus A."/>
            <person name="Glavina del Rio T."/>
            <person name="Tice H."/>
            <person name="Bruce D."/>
            <person name="Goodwin L."/>
            <person name="Pitluck S."/>
            <person name="Goltsman E."/>
            <person name="Clum A."/>
            <person name="Larimer F."/>
            <person name="Land M."/>
            <person name="Hauser L."/>
            <person name="Kyrpides N."/>
            <person name="Mikhailova N."/>
            <person name="Jansson J."/>
            <person name="Richardson P."/>
        </authorList>
    </citation>
    <scope>NUCLEOTIDE SEQUENCE [LARGE SCALE GENOMIC DNA]</scope>
    <source>
        <strain>ATCC 700700 / DSM 12829 / CIP 107037 / JCM 12360 / KCTC 9906 / NCIMB 13794 / A6</strain>
    </source>
</reference>
<evidence type="ECO:0000255" key="1">
    <source>
        <dbReference type="HAMAP-Rule" id="MF_00294"/>
    </source>
</evidence>
<evidence type="ECO:0000305" key="2"/>
<sequence length="55" mass="6650">MAKDKDVRPIIKLKSTAGTGYTYVTRKNRRNDPDRMVLKKYDPKIRQHVEFREER</sequence>
<proteinExistence type="inferred from homology"/>
<name>RL33_PSECP</name>
<organism>
    <name type="scientific">Pseudarthrobacter chlorophenolicus (strain ATCC 700700 / DSM 12829 / CIP 107037 / JCM 12360 / KCTC 9906 / NCIMB 13794 / A6)</name>
    <name type="common">Arthrobacter chlorophenolicus</name>
    <dbReference type="NCBI Taxonomy" id="452863"/>
    <lineage>
        <taxon>Bacteria</taxon>
        <taxon>Bacillati</taxon>
        <taxon>Actinomycetota</taxon>
        <taxon>Actinomycetes</taxon>
        <taxon>Micrococcales</taxon>
        <taxon>Micrococcaceae</taxon>
        <taxon>Pseudarthrobacter</taxon>
    </lineage>
</organism>
<comment type="similarity">
    <text evidence="1">Belongs to the bacterial ribosomal protein bL33 family.</text>
</comment>
<feature type="chain" id="PRO_1000194046" description="Large ribosomal subunit protein bL33">
    <location>
        <begin position="1"/>
        <end position="55"/>
    </location>
</feature>
<gene>
    <name evidence="1" type="primary">rpmG</name>
    <name type="ordered locus">Achl_3722</name>
</gene>
<dbReference type="EMBL" id="CP001341">
    <property type="protein sequence ID" value="ACL41677.1"/>
    <property type="molecule type" value="Genomic_DNA"/>
</dbReference>
<dbReference type="RefSeq" id="WP_013602737.1">
    <property type="nucleotide sequence ID" value="NC_011886.1"/>
</dbReference>
<dbReference type="SMR" id="B8H775"/>
<dbReference type="STRING" id="452863.Achl_3722"/>
<dbReference type="GeneID" id="97423275"/>
<dbReference type="KEGG" id="ach:Achl_3722"/>
<dbReference type="eggNOG" id="COG0267">
    <property type="taxonomic scope" value="Bacteria"/>
</dbReference>
<dbReference type="HOGENOM" id="CLU_190949_1_1_11"/>
<dbReference type="OrthoDB" id="21586at2"/>
<dbReference type="Proteomes" id="UP000002505">
    <property type="component" value="Chromosome"/>
</dbReference>
<dbReference type="GO" id="GO:0022625">
    <property type="term" value="C:cytosolic large ribosomal subunit"/>
    <property type="evidence" value="ECO:0007669"/>
    <property type="project" value="TreeGrafter"/>
</dbReference>
<dbReference type="GO" id="GO:0003735">
    <property type="term" value="F:structural constituent of ribosome"/>
    <property type="evidence" value="ECO:0007669"/>
    <property type="project" value="InterPro"/>
</dbReference>
<dbReference type="GO" id="GO:0006412">
    <property type="term" value="P:translation"/>
    <property type="evidence" value="ECO:0007669"/>
    <property type="project" value="UniProtKB-UniRule"/>
</dbReference>
<dbReference type="FunFam" id="2.20.28.120:FF:000002">
    <property type="entry name" value="50S ribosomal protein L33"/>
    <property type="match status" value="1"/>
</dbReference>
<dbReference type="Gene3D" id="2.20.28.120">
    <property type="entry name" value="Ribosomal protein L33"/>
    <property type="match status" value="1"/>
</dbReference>
<dbReference type="HAMAP" id="MF_00294">
    <property type="entry name" value="Ribosomal_bL33"/>
    <property type="match status" value="1"/>
</dbReference>
<dbReference type="InterPro" id="IPR001705">
    <property type="entry name" value="Ribosomal_bL33"/>
</dbReference>
<dbReference type="InterPro" id="IPR018264">
    <property type="entry name" value="Ribosomal_bL33_CS"/>
</dbReference>
<dbReference type="InterPro" id="IPR038584">
    <property type="entry name" value="Ribosomal_bL33_sf"/>
</dbReference>
<dbReference type="InterPro" id="IPR011332">
    <property type="entry name" value="Ribosomal_zn-bd"/>
</dbReference>
<dbReference type="NCBIfam" id="NF001860">
    <property type="entry name" value="PRK00595.1"/>
    <property type="match status" value="1"/>
</dbReference>
<dbReference type="NCBIfam" id="TIGR01023">
    <property type="entry name" value="rpmG_bact"/>
    <property type="match status" value="1"/>
</dbReference>
<dbReference type="PANTHER" id="PTHR15238">
    <property type="entry name" value="54S RIBOSOMAL PROTEIN L39, MITOCHONDRIAL"/>
    <property type="match status" value="1"/>
</dbReference>
<dbReference type="PANTHER" id="PTHR15238:SF1">
    <property type="entry name" value="LARGE RIBOSOMAL SUBUNIT PROTEIN BL33M"/>
    <property type="match status" value="1"/>
</dbReference>
<dbReference type="Pfam" id="PF00471">
    <property type="entry name" value="Ribosomal_L33"/>
    <property type="match status" value="1"/>
</dbReference>
<dbReference type="SUPFAM" id="SSF57829">
    <property type="entry name" value="Zn-binding ribosomal proteins"/>
    <property type="match status" value="1"/>
</dbReference>
<dbReference type="PROSITE" id="PS00582">
    <property type="entry name" value="RIBOSOMAL_L33"/>
    <property type="match status" value="1"/>
</dbReference>
<keyword id="KW-0687">Ribonucleoprotein</keyword>
<keyword id="KW-0689">Ribosomal protein</keyword>
<accession>B8H775</accession>